<reference key="1">
    <citation type="journal article" date="2006" name="Proc. Natl. Acad. Sci. U.S.A.">
        <title>Identification of genes subject to positive selection in uropathogenic strains of Escherichia coli: a comparative genomics approach.</title>
        <authorList>
            <person name="Chen S.L."/>
            <person name="Hung C.-S."/>
            <person name="Xu J."/>
            <person name="Reigstad C.S."/>
            <person name="Magrini V."/>
            <person name="Sabo A."/>
            <person name="Blasiar D."/>
            <person name="Bieri T."/>
            <person name="Meyer R.R."/>
            <person name="Ozersky P."/>
            <person name="Armstrong J.R."/>
            <person name="Fulton R.S."/>
            <person name="Latreille J.P."/>
            <person name="Spieth J."/>
            <person name="Hooton T.M."/>
            <person name="Mardis E.R."/>
            <person name="Hultgren S.J."/>
            <person name="Gordon J.I."/>
        </authorList>
    </citation>
    <scope>NUCLEOTIDE SEQUENCE [LARGE SCALE GENOMIC DNA]</scope>
    <source>
        <strain>UTI89 / UPEC</strain>
    </source>
</reference>
<gene>
    <name evidence="1" type="primary">caiC</name>
    <name type="ordered locus">UTI89_C0043</name>
</gene>
<accession>Q1RGG1</accession>
<name>CAIC_ECOUT</name>
<protein>
    <recommendedName>
        <fullName evidence="1">Crotonobetaine/carnitine--CoA ligase</fullName>
        <ecNumber evidence="1">6.2.1.48</ecNumber>
    </recommendedName>
</protein>
<dbReference type="EC" id="6.2.1.48" evidence="1"/>
<dbReference type="EMBL" id="CP000243">
    <property type="protein sequence ID" value="ABE05553.1"/>
    <property type="status" value="ALT_INIT"/>
    <property type="molecule type" value="Genomic_DNA"/>
</dbReference>
<dbReference type="RefSeq" id="WP_001350362.1">
    <property type="nucleotide sequence ID" value="NZ_CP064825.1"/>
</dbReference>
<dbReference type="SMR" id="Q1RGG1"/>
<dbReference type="KEGG" id="eci:UTI89_C0043"/>
<dbReference type="HOGENOM" id="CLU_000022_59_0_6"/>
<dbReference type="UniPathway" id="UPA00117"/>
<dbReference type="Proteomes" id="UP000001952">
    <property type="component" value="Chromosome"/>
</dbReference>
<dbReference type="GO" id="GO:0051108">
    <property type="term" value="F:carnitine-CoA ligase activity"/>
    <property type="evidence" value="ECO:0007669"/>
    <property type="project" value="InterPro"/>
</dbReference>
<dbReference type="GO" id="GO:0051109">
    <property type="term" value="F:crotonobetaine-CoA ligase activity"/>
    <property type="evidence" value="ECO:0007669"/>
    <property type="project" value="InterPro"/>
</dbReference>
<dbReference type="GO" id="GO:0031956">
    <property type="term" value="F:medium-chain fatty acid-CoA ligase activity"/>
    <property type="evidence" value="ECO:0007669"/>
    <property type="project" value="TreeGrafter"/>
</dbReference>
<dbReference type="GO" id="GO:0009437">
    <property type="term" value="P:carnitine metabolic process"/>
    <property type="evidence" value="ECO:0007669"/>
    <property type="project" value="UniProtKB-UniRule"/>
</dbReference>
<dbReference type="GO" id="GO:0006631">
    <property type="term" value="P:fatty acid metabolic process"/>
    <property type="evidence" value="ECO:0007669"/>
    <property type="project" value="TreeGrafter"/>
</dbReference>
<dbReference type="CDD" id="cd05934">
    <property type="entry name" value="FACL_DitJ_like"/>
    <property type="match status" value="1"/>
</dbReference>
<dbReference type="FunFam" id="3.30.300.30:FF:000011">
    <property type="entry name" value="Crotonobetaine/carnitine--CoA ligase"/>
    <property type="match status" value="1"/>
</dbReference>
<dbReference type="FunFam" id="3.40.50.12780:FF:000017">
    <property type="entry name" value="Crotonobetaine/carnitine--CoA ligase"/>
    <property type="match status" value="1"/>
</dbReference>
<dbReference type="Gene3D" id="3.30.300.30">
    <property type="match status" value="1"/>
</dbReference>
<dbReference type="Gene3D" id="3.40.50.12780">
    <property type="entry name" value="N-terminal domain of ligase-like"/>
    <property type="match status" value="1"/>
</dbReference>
<dbReference type="HAMAP" id="MF_01524">
    <property type="entry name" value="CaiC"/>
    <property type="match status" value="1"/>
</dbReference>
<dbReference type="InterPro" id="IPR025110">
    <property type="entry name" value="AMP-bd_C"/>
</dbReference>
<dbReference type="InterPro" id="IPR045851">
    <property type="entry name" value="AMP-bd_C_sf"/>
</dbReference>
<dbReference type="InterPro" id="IPR020845">
    <property type="entry name" value="AMP-binding_CS"/>
</dbReference>
<dbReference type="InterPro" id="IPR000873">
    <property type="entry name" value="AMP-dep_synth/lig_dom"/>
</dbReference>
<dbReference type="InterPro" id="IPR042099">
    <property type="entry name" value="ANL_N_sf"/>
</dbReference>
<dbReference type="InterPro" id="IPR023456">
    <property type="entry name" value="CaiC"/>
</dbReference>
<dbReference type="NCBIfam" id="NF005947">
    <property type="entry name" value="PRK08008.1"/>
    <property type="match status" value="1"/>
</dbReference>
<dbReference type="PANTHER" id="PTHR43201">
    <property type="entry name" value="ACYL-COA SYNTHETASE"/>
    <property type="match status" value="1"/>
</dbReference>
<dbReference type="PANTHER" id="PTHR43201:SF5">
    <property type="entry name" value="MEDIUM-CHAIN ACYL-COA LIGASE ACSF2, MITOCHONDRIAL"/>
    <property type="match status" value="1"/>
</dbReference>
<dbReference type="Pfam" id="PF00501">
    <property type="entry name" value="AMP-binding"/>
    <property type="match status" value="1"/>
</dbReference>
<dbReference type="Pfam" id="PF13193">
    <property type="entry name" value="AMP-binding_C"/>
    <property type="match status" value="1"/>
</dbReference>
<dbReference type="SUPFAM" id="SSF56801">
    <property type="entry name" value="Acetyl-CoA synthetase-like"/>
    <property type="match status" value="1"/>
</dbReference>
<dbReference type="PROSITE" id="PS00455">
    <property type="entry name" value="AMP_BINDING"/>
    <property type="match status" value="1"/>
</dbReference>
<organism>
    <name type="scientific">Escherichia coli (strain UTI89 / UPEC)</name>
    <dbReference type="NCBI Taxonomy" id="364106"/>
    <lineage>
        <taxon>Bacteria</taxon>
        <taxon>Pseudomonadati</taxon>
        <taxon>Pseudomonadota</taxon>
        <taxon>Gammaproteobacteria</taxon>
        <taxon>Enterobacterales</taxon>
        <taxon>Enterobacteriaceae</taxon>
        <taxon>Escherichia</taxon>
    </lineage>
</organism>
<keyword id="KW-0436">Ligase</keyword>
<evidence type="ECO:0000255" key="1">
    <source>
        <dbReference type="HAMAP-Rule" id="MF_01524"/>
    </source>
</evidence>
<evidence type="ECO:0000305" key="2"/>
<feature type="chain" id="PRO_0000298679" description="Crotonobetaine/carnitine--CoA ligase">
    <location>
        <begin position="1"/>
        <end position="517"/>
    </location>
</feature>
<proteinExistence type="inferred from homology"/>
<sequence length="517" mass="58591">MDIIGGQHLRQMWDDLADVYGHKTALICESSGGVVNRYSYLELNQEINRTANLFYTLGIRKGDKVALHLDNCPEFIFCWFGLAKIGAIMVPINARLLREESTWILQNSQACLLVTSAQFYPMYQQIQQEDASQLRHICLIDMALPADDGVSSFTQLKNQQPATLCYAPPLSTDDTAEILFTSGTTSRPKGVVITHYNLRFAGYYSAWQCALRDDDVYLTVMPAFHIDCQCTAAMAAFSAGATFVLVEKYSARAFWGQVQKYRATITECIPMMIRTLMVQPPSANDRQHRLREVMFYLNLSEQEKDAFCERFGVRLLTSYGMTETIVGIIGDRPGDKRRWPSIGRAGFCYEAEIRDDHNRPLPAGELGEICIKGVPGKTIFKEYFLNPKATAKVLEADGWLHTGDTGYRDEEGFFYFVDRRCNMIKRGGENVSCVELENIIATHPKIQDIVVVGIKDSIRDEAIKAFVVLNEGETLSEEEFFCFCEQNMAKFKVPSYLEIRKDLPRNCSGKIIRKNLK</sequence>
<comment type="function">
    <text evidence="1">Catalyzes the transfer of CoA to carnitine, generating the initial carnitinyl-CoA needed for the CaiB reaction cycle. Also has activity toward crotonobetaine and gamma-butyrobetaine.</text>
</comment>
<comment type="catalytic activity">
    <reaction evidence="1">
        <text>4-(trimethylamino)butanoate + ATP + CoA = 4-(trimethylamino)butanoyl-CoA + AMP + diphosphate</text>
        <dbReference type="Rhea" id="RHEA:55960"/>
        <dbReference type="ChEBI" id="CHEBI:16244"/>
        <dbReference type="ChEBI" id="CHEBI:30616"/>
        <dbReference type="ChEBI" id="CHEBI:33019"/>
        <dbReference type="ChEBI" id="CHEBI:57287"/>
        <dbReference type="ChEBI" id="CHEBI:61513"/>
        <dbReference type="ChEBI" id="CHEBI:456215"/>
        <dbReference type="EC" id="6.2.1.48"/>
    </reaction>
</comment>
<comment type="catalytic activity">
    <reaction evidence="1">
        <text>crotonobetaine + ATP + CoA = crotonobetainyl-CoA + AMP + diphosphate</text>
        <dbReference type="Rhea" id="RHEA:30079"/>
        <dbReference type="ChEBI" id="CHEBI:17237"/>
        <dbReference type="ChEBI" id="CHEBI:30616"/>
        <dbReference type="ChEBI" id="CHEBI:33019"/>
        <dbReference type="ChEBI" id="CHEBI:57287"/>
        <dbReference type="ChEBI" id="CHEBI:60933"/>
        <dbReference type="ChEBI" id="CHEBI:456215"/>
        <dbReference type="EC" id="6.2.1.48"/>
    </reaction>
</comment>
<comment type="catalytic activity">
    <reaction evidence="1">
        <text>(R)-carnitine + ATP + CoA = (R)-carnitinyl-CoA + AMP + diphosphate</text>
        <dbReference type="Rhea" id="RHEA:28514"/>
        <dbReference type="ChEBI" id="CHEBI:16347"/>
        <dbReference type="ChEBI" id="CHEBI:30616"/>
        <dbReference type="ChEBI" id="CHEBI:33019"/>
        <dbReference type="ChEBI" id="CHEBI:57287"/>
        <dbReference type="ChEBI" id="CHEBI:60932"/>
        <dbReference type="ChEBI" id="CHEBI:456215"/>
        <dbReference type="EC" id="6.2.1.48"/>
    </reaction>
</comment>
<comment type="pathway">
    <text evidence="1">Amine and polyamine metabolism; carnitine metabolism.</text>
</comment>
<comment type="similarity">
    <text evidence="1">Belongs to the ATP-dependent AMP-binding enzyme family.</text>
</comment>
<comment type="sequence caution" evidence="2">
    <conflict type="erroneous initiation">
        <sequence resource="EMBL-CDS" id="ABE05553"/>
    </conflict>
</comment>